<comment type="function">
    <text evidence="3">Part of the yadCKLM-htrE-yadVN fimbrial operon. Could contribute to adhesion to various surfaces in specific environmental niches.</text>
</comment>
<comment type="subcellular location">
    <subcellularLocation>
        <location evidence="1">Periplasm</location>
    </subcellularLocation>
</comment>
<comment type="induction">
    <text evidence="3 4">Repressed by H-NS. Induced by heat shock.</text>
</comment>
<comment type="disruption phenotype">
    <text evidence="3">Deletion of the operon under classical laboratory conditions does not result in any major effect on E.coli capacity to form biofilms compared with the wild-type strain.</text>
</comment>
<comment type="miscellaneous">
    <text evidence="6">The operon is cryptic under classical laboratory conditions, but is functional when constitutively expressed.</text>
</comment>
<comment type="similarity">
    <text evidence="5">Belongs to the periplasmic pilus chaperone family.</text>
</comment>
<comment type="caution">
    <text evidence="7">Was originally called ecpD, but ecp is now used for the ecpABCDE operon involved in E.coli common pilus (ECP) synthesis.</text>
</comment>
<organism>
    <name type="scientific">Escherichia coli (strain K12)</name>
    <dbReference type="NCBI Taxonomy" id="83333"/>
    <lineage>
        <taxon>Bacteria</taxon>
        <taxon>Pseudomonadati</taxon>
        <taxon>Pseudomonadota</taxon>
        <taxon>Gammaproteobacteria</taxon>
        <taxon>Enterobacterales</taxon>
        <taxon>Enterobacteriaceae</taxon>
        <taxon>Escherichia</taxon>
    </lineage>
</organism>
<dbReference type="EMBL" id="L00680">
    <property type="protein sequence ID" value="AAA23720.1"/>
    <property type="molecule type" value="Genomic_DNA"/>
</dbReference>
<dbReference type="EMBL" id="U00096">
    <property type="protein sequence ID" value="AAC73251.1"/>
    <property type="molecule type" value="Genomic_DNA"/>
</dbReference>
<dbReference type="EMBL" id="AP009048">
    <property type="protein sequence ID" value="BAB96716.1"/>
    <property type="molecule type" value="Genomic_DNA"/>
</dbReference>
<dbReference type="PIR" id="S45209">
    <property type="entry name" value="S45209"/>
</dbReference>
<dbReference type="RefSeq" id="NP_414682.1">
    <property type="nucleotide sequence ID" value="NC_000913.3"/>
</dbReference>
<dbReference type="RefSeq" id="WP_000465928.1">
    <property type="nucleotide sequence ID" value="NZ_STEB01000010.1"/>
</dbReference>
<dbReference type="PDB" id="5GHU">
    <property type="method" value="X-ray"/>
    <property type="resolution" value="1.63 A"/>
    <property type="chains" value="A=26-246"/>
</dbReference>
<dbReference type="PDBsum" id="5GHU"/>
<dbReference type="SMR" id="P33128"/>
<dbReference type="BioGRID" id="4263031">
    <property type="interactions" value="17"/>
</dbReference>
<dbReference type="DIP" id="DIP-9492N"/>
<dbReference type="FunCoup" id="P33128">
    <property type="interactions" value="71"/>
</dbReference>
<dbReference type="IntAct" id="P33128">
    <property type="interactions" value="1"/>
</dbReference>
<dbReference type="STRING" id="511145.b0140"/>
<dbReference type="PaxDb" id="511145-b0140"/>
<dbReference type="EnsemblBacteria" id="AAC73251">
    <property type="protein sequence ID" value="AAC73251"/>
    <property type="gene ID" value="b0140"/>
</dbReference>
<dbReference type="GeneID" id="944859"/>
<dbReference type="KEGG" id="ecj:JW0136"/>
<dbReference type="KEGG" id="eco:b0140"/>
<dbReference type="PATRIC" id="fig|1411691.4.peg.2141"/>
<dbReference type="EchoBASE" id="EB1916"/>
<dbReference type="eggNOG" id="COG3121">
    <property type="taxonomic scope" value="Bacteria"/>
</dbReference>
<dbReference type="HOGENOM" id="CLU_070768_0_2_6"/>
<dbReference type="InParanoid" id="P33128"/>
<dbReference type="OMA" id="FITINDY"/>
<dbReference type="OrthoDB" id="9131059at2"/>
<dbReference type="PhylomeDB" id="P33128"/>
<dbReference type="BioCyc" id="EcoCyc:EG11973-MONOMER"/>
<dbReference type="PRO" id="PR:P33128"/>
<dbReference type="Proteomes" id="UP000000625">
    <property type="component" value="Chromosome"/>
</dbReference>
<dbReference type="GO" id="GO:0030288">
    <property type="term" value="C:outer membrane-bounded periplasmic space"/>
    <property type="evidence" value="ECO:0000318"/>
    <property type="project" value="GO_Central"/>
</dbReference>
<dbReference type="GO" id="GO:0044183">
    <property type="term" value="F:protein folding chaperone"/>
    <property type="evidence" value="ECO:0000318"/>
    <property type="project" value="GO_Central"/>
</dbReference>
<dbReference type="GO" id="GO:0007155">
    <property type="term" value="P:cell adhesion"/>
    <property type="evidence" value="ECO:0000315"/>
    <property type="project" value="EcoCyc"/>
</dbReference>
<dbReference type="GO" id="GO:0071555">
    <property type="term" value="P:cell wall organization"/>
    <property type="evidence" value="ECO:0007669"/>
    <property type="project" value="InterPro"/>
</dbReference>
<dbReference type="GO" id="GO:0061077">
    <property type="term" value="P:chaperone-mediated protein folding"/>
    <property type="evidence" value="ECO:0000318"/>
    <property type="project" value="GO_Central"/>
</dbReference>
<dbReference type="DisProt" id="DP02923"/>
<dbReference type="FunFam" id="2.60.40.10:FF:000458">
    <property type="entry name" value="Molecular chaperone FimC"/>
    <property type="match status" value="1"/>
</dbReference>
<dbReference type="FunFam" id="2.60.40.10:FF:002006">
    <property type="entry name" value="Probable fimbrial chaperone YadV"/>
    <property type="match status" value="1"/>
</dbReference>
<dbReference type="Gene3D" id="2.60.40.10">
    <property type="entry name" value="Immunoglobulins"/>
    <property type="match status" value="2"/>
</dbReference>
<dbReference type="InterPro" id="IPR013783">
    <property type="entry name" value="Ig-like_fold"/>
</dbReference>
<dbReference type="InterPro" id="IPR008962">
    <property type="entry name" value="PapD-like_sf"/>
</dbReference>
<dbReference type="InterPro" id="IPR050643">
    <property type="entry name" value="Periplasmic_pilus_chap"/>
</dbReference>
<dbReference type="InterPro" id="IPR036316">
    <property type="entry name" value="Pili_assmbl_chap_C_dom_sf"/>
</dbReference>
<dbReference type="InterPro" id="IPR001829">
    <property type="entry name" value="Pili_assmbl_chaperone_bac"/>
</dbReference>
<dbReference type="InterPro" id="IPR016148">
    <property type="entry name" value="Pili_assmbl_chaperone_C"/>
</dbReference>
<dbReference type="InterPro" id="IPR018046">
    <property type="entry name" value="Pili_assmbl_chaperone_CS"/>
</dbReference>
<dbReference type="InterPro" id="IPR016147">
    <property type="entry name" value="Pili_assmbl_chaperone_N"/>
</dbReference>
<dbReference type="NCBIfam" id="NF007398">
    <property type="entry name" value="PRK09926.1"/>
    <property type="match status" value="1"/>
</dbReference>
<dbReference type="PANTHER" id="PTHR30251:SF2">
    <property type="entry name" value="FIMBRIAL CHAPERONE YADV-RELATED"/>
    <property type="match status" value="1"/>
</dbReference>
<dbReference type="PANTHER" id="PTHR30251">
    <property type="entry name" value="PILUS ASSEMBLY CHAPERONE"/>
    <property type="match status" value="1"/>
</dbReference>
<dbReference type="Pfam" id="PF02753">
    <property type="entry name" value="PapD_C"/>
    <property type="match status" value="1"/>
</dbReference>
<dbReference type="Pfam" id="PF00345">
    <property type="entry name" value="PapD_N"/>
    <property type="match status" value="1"/>
</dbReference>
<dbReference type="PRINTS" id="PR00969">
    <property type="entry name" value="CHAPERONPILI"/>
</dbReference>
<dbReference type="SUPFAM" id="SSF49354">
    <property type="entry name" value="PapD-like"/>
    <property type="match status" value="1"/>
</dbReference>
<dbReference type="SUPFAM" id="SSF49584">
    <property type="entry name" value="Periplasmic chaperone C-domain"/>
    <property type="match status" value="1"/>
</dbReference>
<dbReference type="PROSITE" id="PS00635">
    <property type="entry name" value="PILI_CHAPERONE"/>
    <property type="match status" value="1"/>
</dbReference>
<accession>P33128</accession>
<feature type="signal peptide" evidence="2">
    <location>
        <begin position="1"/>
        <end position="25"/>
    </location>
</feature>
<feature type="chain" id="PRO_0000009269" description="Probable fimbrial chaperone YadV">
    <location>
        <begin position="26"/>
        <end position="246"/>
    </location>
</feature>
<feature type="sequence conflict" description="In Ref. 1; AAA23720." evidence="5" ref="1">
    <original>A</original>
    <variation>R</variation>
    <location>
        <position position="79"/>
    </location>
</feature>
<feature type="sequence conflict" description="In Ref. 1; AAA23720." evidence="5" ref="1">
    <original>SV</original>
    <variation>RA</variation>
    <location>
        <begin position="110"/>
        <end position="111"/>
    </location>
</feature>
<feature type="strand" evidence="8">
    <location>
        <begin position="27"/>
        <end position="37"/>
    </location>
</feature>
<feature type="strand" evidence="8">
    <location>
        <begin position="43"/>
        <end position="49"/>
    </location>
</feature>
<feature type="strand" evidence="8">
    <location>
        <begin position="51"/>
        <end position="53"/>
    </location>
</feature>
<feature type="strand" evidence="8">
    <location>
        <begin position="55"/>
        <end position="63"/>
    </location>
</feature>
<feature type="strand" evidence="8">
    <location>
        <begin position="76"/>
        <end position="86"/>
    </location>
</feature>
<feature type="strand" evidence="8">
    <location>
        <begin position="91"/>
        <end position="98"/>
    </location>
</feature>
<feature type="strand" evidence="8">
    <location>
        <begin position="106"/>
        <end position="108"/>
    </location>
</feature>
<feature type="strand" evidence="8">
    <location>
        <begin position="110"/>
        <end position="119"/>
    </location>
</feature>
<feature type="strand" evidence="8">
    <location>
        <begin position="138"/>
        <end position="147"/>
    </location>
</feature>
<feature type="helix" evidence="8">
    <location>
        <begin position="155"/>
        <end position="157"/>
    </location>
</feature>
<feature type="helix" evidence="8">
    <location>
        <begin position="158"/>
        <end position="161"/>
    </location>
</feature>
<feature type="strand" evidence="8">
    <location>
        <begin position="163"/>
        <end position="167"/>
    </location>
</feature>
<feature type="strand" evidence="8">
    <location>
        <begin position="174"/>
        <end position="179"/>
    </location>
</feature>
<feature type="strand" evidence="8">
    <location>
        <begin position="181"/>
        <end position="183"/>
    </location>
</feature>
<feature type="strand" evidence="8">
    <location>
        <begin position="187"/>
        <end position="194"/>
    </location>
</feature>
<feature type="strand" evidence="8">
    <location>
        <begin position="197"/>
        <end position="201"/>
    </location>
</feature>
<feature type="strand" evidence="8">
    <location>
        <begin position="210"/>
        <end position="216"/>
    </location>
</feature>
<feature type="strand" evidence="8">
    <location>
        <begin position="227"/>
        <end position="233"/>
    </location>
</feature>
<feature type="strand" evidence="8">
    <location>
        <begin position="239"/>
        <end position="245"/>
    </location>
</feature>
<proteinExistence type="evidence at protein level"/>
<name>YADV_ECOLI</name>
<sequence length="246" mass="27054">MFFNTKHTTALCFVTCMAFSSSSIADIVISGTRVIYKSDQKSVNVRLENKGNNPLLVQSWLDTGDDNAEPGSITVPFTATPPVSRIDAKRGQTIKLMYTASTSLPKDRESVFWFNVLEVPPKPDAEKVANQSLLQLAFRTRIKLFYRPDGLKGNPSEAPLALKWFWSGSEGKASLRVTNPTPYYVSFSSGDLEASGKRYPIDVKMIAPFSDEVMKVNGLNGKANSAKVHFYAINDFGGAIEGNARL</sequence>
<gene>
    <name type="primary">yadV</name>
    <name type="synonym">ecpD</name>
    <name type="ordered locus">b0140</name>
    <name type="ordered locus">JW0136</name>
</gene>
<reference key="1">
    <citation type="journal article" date="1993" name="J. Bacteriol.">
        <title>Identification and transcriptional analysis of the Escherichia coli htrE operon which is homologous to pap and related pilin operons.</title>
        <authorList>
            <person name="Raina S."/>
            <person name="Missiakas D."/>
            <person name="Baird L."/>
            <person name="Kumar S."/>
            <person name="Georgopoulos C."/>
        </authorList>
    </citation>
    <scope>NUCLEOTIDE SEQUENCE [GENOMIC DNA]</scope>
    <scope>INDUCTION BY HEAT SHOCK</scope>
    <source>
        <strain>K12</strain>
    </source>
</reference>
<reference key="2">
    <citation type="journal article" date="1994" name="Nucleic Acids Res.">
        <title>Systematic sequencing of the Escherichia coli genome: analysis of the 2.4-4.1 min (110,917-193,643 bp) region.</title>
        <authorList>
            <person name="Fujita N."/>
            <person name="Mori H."/>
            <person name="Yura T."/>
            <person name="Ishihama A."/>
        </authorList>
    </citation>
    <scope>NUCLEOTIDE SEQUENCE [LARGE SCALE GENOMIC DNA]</scope>
    <source>
        <strain>K12 / W3110 / ATCC 27325 / DSM 5911</strain>
    </source>
</reference>
<reference key="3">
    <citation type="journal article" date="1997" name="Science">
        <title>The complete genome sequence of Escherichia coli K-12.</title>
        <authorList>
            <person name="Blattner F.R."/>
            <person name="Plunkett G. III"/>
            <person name="Bloch C.A."/>
            <person name="Perna N.T."/>
            <person name="Burland V."/>
            <person name="Riley M."/>
            <person name="Collado-Vides J."/>
            <person name="Glasner J.D."/>
            <person name="Rode C.K."/>
            <person name="Mayhew G.F."/>
            <person name="Gregor J."/>
            <person name="Davis N.W."/>
            <person name="Kirkpatrick H.A."/>
            <person name="Goeden M.A."/>
            <person name="Rose D.J."/>
            <person name="Mau B."/>
            <person name="Shao Y."/>
        </authorList>
    </citation>
    <scope>NUCLEOTIDE SEQUENCE [LARGE SCALE GENOMIC DNA]</scope>
    <source>
        <strain>K12 / MG1655 / ATCC 47076</strain>
    </source>
</reference>
<reference key="4">
    <citation type="journal article" date="2006" name="Mol. Syst. Biol.">
        <title>Highly accurate genome sequences of Escherichia coli K-12 strains MG1655 and W3110.</title>
        <authorList>
            <person name="Hayashi K."/>
            <person name="Morooka N."/>
            <person name="Yamamoto Y."/>
            <person name="Fujita K."/>
            <person name="Isono K."/>
            <person name="Choi S."/>
            <person name="Ohtsubo E."/>
            <person name="Baba T."/>
            <person name="Wanner B.L."/>
            <person name="Mori H."/>
            <person name="Horiuchi T."/>
        </authorList>
    </citation>
    <scope>NUCLEOTIDE SEQUENCE [LARGE SCALE GENOMIC DNA]</scope>
    <source>
        <strain>K12 / W3110 / ATCC 27325 / DSM 5911</strain>
    </source>
</reference>
<reference key="5">
    <citation type="journal article" date="2010" name="Environ. Microbiol.">
        <title>Escherichia coli K-12 possesses multiple cryptic but functional chaperone-usher fimbriae with distinct surface specificities.</title>
        <authorList>
            <person name="Korea C.G."/>
            <person name="Badouraly R."/>
            <person name="Prevost M.C."/>
            <person name="Ghigo J.M."/>
            <person name="Beloin C."/>
        </authorList>
    </citation>
    <scope>FUNCTION</scope>
    <scope>INDUCTION</scope>
    <scope>DISRUPTION PHENOTYPE</scope>
    <source>
        <strain>K12 / MG1655 / ATCC 47076</strain>
    </source>
</reference>
<protein>
    <recommendedName>
        <fullName>Probable fimbrial chaperone YadV</fullName>
    </recommendedName>
</protein>
<keyword id="KW-0002">3D-structure</keyword>
<keyword id="KW-0143">Chaperone</keyword>
<keyword id="KW-1029">Fimbrium biogenesis</keyword>
<keyword id="KW-0393">Immunoglobulin domain</keyword>
<keyword id="KW-0574">Periplasm</keyword>
<keyword id="KW-1185">Reference proteome</keyword>
<keyword id="KW-0732">Signal</keyword>
<keyword id="KW-0346">Stress response</keyword>
<evidence type="ECO:0000250" key="1"/>
<evidence type="ECO:0000255" key="2"/>
<evidence type="ECO:0000269" key="3">
    <source>
    </source>
</evidence>
<evidence type="ECO:0000269" key="4">
    <source>
    </source>
</evidence>
<evidence type="ECO:0000305" key="5"/>
<evidence type="ECO:0000305" key="6">
    <source>
    </source>
</evidence>
<evidence type="ECO:0000305" key="7">
    <source>
    </source>
</evidence>
<evidence type="ECO:0007829" key="8">
    <source>
        <dbReference type="PDB" id="5GHU"/>
    </source>
</evidence>